<accession>A1VKW0</accession>
<keyword id="KW-0143">Chaperone</keyword>
<keyword id="KW-0963">Cytoplasm</keyword>
<keyword id="KW-0342">GTP-binding</keyword>
<keyword id="KW-0996">Nickel insertion</keyword>
<keyword id="KW-0547">Nucleotide-binding</keyword>
<keyword id="KW-1185">Reference proteome</keyword>
<dbReference type="EMBL" id="CP000529">
    <property type="protein sequence ID" value="ABM36288.1"/>
    <property type="molecule type" value="Genomic_DNA"/>
</dbReference>
<dbReference type="RefSeq" id="WP_011800382.1">
    <property type="nucleotide sequence ID" value="NC_008781.1"/>
</dbReference>
<dbReference type="SMR" id="A1VKW0"/>
<dbReference type="STRING" id="365044.Pnap_0971"/>
<dbReference type="KEGG" id="pna:Pnap_0971"/>
<dbReference type="eggNOG" id="COG0378">
    <property type="taxonomic scope" value="Bacteria"/>
</dbReference>
<dbReference type="HOGENOM" id="CLU_072144_1_0_4"/>
<dbReference type="OrthoDB" id="9802035at2"/>
<dbReference type="Proteomes" id="UP000000644">
    <property type="component" value="Chromosome"/>
</dbReference>
<dbReference type="GO" id="GO:0005737">
    <property type="term" value="C:cytoplasm"/>
    <property type="evidence" value="ECO:0007669"/>
    <property type="project" value="UniProtKB-SubCell"/>
</dbReference>
<dbReference type="GO" id="GO:0005525">
    <property type="term" value="F:GTP binding"/>
    <property type="evidence" value="ECO:0007669"/>
    <property type="project" value="UniProtKB-KW"/>
</dbReference>
<dbReference type="GO" id="GO:0003924">
    <property type="term" value="F:GTPase activity"/>
    <property type="evidence" value="ECO:0007669"/>
    <property type="project" value="InterPro"/>
</dbReference>
<dbReference type="GO" id="GO:0016151">
    <property type="term" value="F:nickel cation binding"/>
    <property type="evidence" value="ECO:0007669"/>
    <property type="project" value="UniProtKB-UniRule"/>
</dbReference>
<dbReference type="GO" id="GO:0043419">
    <property type="term" value="P:urea catabolic process"/>
    <property type="evidence" value="ECO:0007669"/>
    <property type="project" value="InterPro"/>
</dbReference>
<dbReference type="CDD" id="cd05540">
    <property type="entry name" value="UreG"/>
    <property type="match status" value="1"/>
</dbReference>
<dbReference type="FunFam" id="3.40.50.300:FF:000208">
    <property type="entry name" value="Urease accessory protein UreG"/>
    <property type="match status" value="1"/>
</dbReference>
<dbReference type="Gene3D" id="3.40.50.300">
    <property type="entry name" value="P-loop containing nucleotide triphosphate hydrolases"/>
    <property type="match status" value="1"/>
</dbReference>
<dbReference type="HAMAP" id="MF_01389">
    <property type="entry name" value="UreG"/>
    <property type="match status" value="1"/>
</dbReference>
<dbReference type="InterPro" id="IPR003495">
    <property type="entry name" value="CobW/HypB/UreG_nucleotide-bd"/>
</dbReference>
<dbReference type="InterPro" id="IPR027417">
    <property type="entry name" value="P-loop_NTPase"/>
</dbReference>
<dbReference type="InterPro" id="IPR004400">
    <property type="entry name" value="UreG"/>
</dbReference>
<dbReference type="NCBIfam" id="TIGR00101">
    <property type="entry name" value="ureG"/>
    <property type="match status" value="1"/>
</dbReference>
<dbReference type="PANTHER" id="PTHR31715">
    <property type="entry name" value="UREASE ACCESSORY PROTEIN G"/>
    <property type="match status" value="1"/>
</dbReference>
<dbReference type="PANTHER" id="PTHR31715:SF0">
    <property type="entry name" value="UREASE ACCESSORY PROTEIN G"/>
    <property type="match status" value="1"/>
</dbReference>
<dbReference type="Pfam" id="PF02492">
    <property type="entry name" value="cobW"/>
    <property type="match status" value="1"/>
</dbReference>
<dbReference type="PIRSF" id="PIRSF005624">
    <property type="entry name" value="Ni-bind_GTPase"/>
    <property type="match status" value="1"/>
</dbReference>
<dbReference type="SUPFAM" id="SSF52540">
    <property type="entry name" value="P-loop containing nucleoside triphosphate hydrolases"/>
    <property type="match status" value="1"/>
</dbReference>
<sequence>MSLHHIANRTKKLPPLRVGIGGPVGSGKTTLLEMLCKAMKDKYDLVAITNDIYTKEDQRLLTVSGALDAERIMGVETGGCPHTAIREDASINLEAIDRMLVEFPDADVVFIESGGDNLAATFSPELSDLTIYVIDVAAGEKIPRKGGPGITKSDLFVINKTDLAPYVGADLGVMQLDTIRMRTTAKGLKPFVMTNLKTNTGLAEVVAFIETKGMLQPA</sequence>
<feature type="chain" id="PRO_1000145200" description="Urease accessory protein UreG">
    <location>
        <begin position="1"/>
        <end position="218"/>
    </location>
</feature>
<feature type="binding site" evidence="1">
    <location>
        <begin position="22"/>
        <end position="29"/>
    </location>
    <ligand>
        <name>GTP</name>
        <dbReference type="ChEBI" id="CHEBI:37565"/>
    </ligand>
</feature>
<proteinExistence type="inferred from homology"/>
<protein>
    <recommendedName>
        <fullName evidence="1">Urease accessory protein UreG</fullName>
    </recommendedName>
</protein>
<gene>
    <name evidence="1" type="primary">ureG</name>
    <name type="ordered locus">Pnap_0971</name>
</gene>
<name>UREG_POLNA</name>
<evidence type="ECO:0000255" key="1">
    <source>
        <dbReference type="HAMAP-Rule" id="MF_01389"/>
    </source>
</evidence>
<comment type="function">
    <text evidence="1">Facilitates the functional incorporation of the urease nickel metallocenter. This process requires GTP hydrolysis, probably effectuated by UreG.</text>
</comment>
<comment type="subunit">
    <text evidence="1">Homodimer. UreD, UreF and UreG form a complex that acts as a GTP-hydrolysis-dependent molecular chaperone, activating the urease apoprotein by helping to assemble the nickel containing metallocenter of UreC. The UreE protein probably delivers the nickel.</text>
</comment>
<comment type="subcellular location">
    <subcellularLocation>
        <location evidence="1">Cytoplasm</location>
    </subcellularLocation>
</comment>
<comment type="similarity">
    <text evidence="1">Belongs to the SIMIBI class G3E GTPase family. UreG subfamily.</text>
</comment>
<organism>
    <name type="scientific">Polaromonas naphthalenivorans (strain CJ2)</name>
    <dbReference type="NCBI Taxonomy" id="365044"/>
    <lineage>
        <taxon>Bacteria</taxon>
        <taxon>Pseudomonadati</taxon>
        <taxon>Pseudomonadota</taxon>
        <taxon>Betaproteobacteria</taxon>
        <taxon>Burkholderiales</taxon>
        <taxon>Comamonadaceae</taxon>
        <taxon>Polaromonas</taxon>
    </lineage>
</organism>
<reference key="1">
    <citation type="journal article" date="2009" name="Environ. Microbiol.">
        <title>The genome of Polaromonas naphthalenivorans strain CJ2, isolated from coal tar-contaminated sediment, reveals physiological and metabolic versatility and evolution through extensive horizontal gene transfer.</title>
        <authorList>
            <person name="Yagi J.M."/>
            <person name="Sims D."/>
            <person name="Brettin T."/>
            <person name="Bruce D."/>
            <person name="Madsen E.L."/>
        </authorList>
    </citation>
    <scope>NUCLEOTIDE SEQUENCE [LARGE SCALE GENOMIC DNA]</scope>
    <source>
        <strain>CJ2</strain>
    </source>
</reference>